<evidence type="ECO:0000255" key="1">
    <source>
        <dbReference type="HAMAP-Rule" id="MF_00227"/>
    </source>
</evidence>
<reference key="1">
    <citation type="journal article" date="2008" name="Chem. Biol. Interact.">
        <title>Extending the Bacillus cereus group genomics to putative food-borne pathogens of different toxicity.</title>
        <authorList>
            <person name="Lapidus A."/>
            <person name="Goltsman E."/>
            <person name="Auger S."/>
            <person name="Galleron N."/>
            <person name="Segurens B."/>
            <person name="Dossat C."/>
            <person name="Land M.L."/>
            <person name="Broussolle V."/>
            <person name="Brillard J."/>
            <person name="Guinebretiere M.-H."/>
            <person name="Sanchis V."/>
            <person name="Nguen-the C."/>
            <person name="Lereclus D."/>
            <person name="Richardson P."/>
            <person name="Wincker P."/>
            <person name="Weissenbach J."/>
            <person name="Ehrlich S.D."/>
            <person name="Sorokin A."/>
        </authorList>
    </citation>
    <scope>NUCLEOTIDE SEQUENCE [LARGE SCALE GENOMIC DNA]</scope>
    <source>
        <strain>KBAB4</strain>
    </source>
</reference>
<comment type="function">
    <text evidence="1">RNaseP catalyzes the removal of the 5'-leader sequence from pre-tRNA to produce the mature 5'-terminus. It can also cleave other RNA substrates such as 4.5S RNA. The protein component plays an auxiliary but essential role in vivo by binding to the 5'-leader sequence and broadening the substrate specificity of the ribozyme.</text>
</comment>
<comment type="catalytic activity">
    <reaction evidence="1">
        <text>Endonucleolytic cleavage of RNA, removing 5'-extranucleotides from tRNA precursor.</text>
        <dbReference type="EC" id="3.1.26.5"/>
    </reaction>
</comment>
<comment type="subunit">
    <text evidence="1">Consists of a catalytic RNA component (M1 or rnpB) and a protein subunit.</text>
</comment>
<comment type="similarity">
    <text evidence="1">Belongs to the RnpA family.</text>
</comment>
<accession>A9VTM3</accession>
<proteinExistence type="inferred from homology"/>
<protein>
    <recommendedName>
        <fullName evidence="1">Ribonuclease P protein component</fullName>
        <shortName evidence="1">RNase P protein</shortName>
        <shortName evidence="1">RNaseP protein</shortName>
        <ecNumber evidence="1">3.1.26.5</ecNumber>
    </recommendedName>
    <alternativeName>
        <fullName evidence="1">Protein C5</fullName>
    </alternativeName>
</protein>
<name>RNPA_BACMK</name>
<gene>
    <name evidence="1" type="primary">rnpA</name>
    <name type="ordered locus">BcerKBAB4_5280</name>
</gene>
<sequence length="115" mass="13578">MKKKNRIKKNDEFQAVFQKGQSNANRQFVVYKLDKEKQPHFRIGLSVSKKIGNAVVRNRIKRMIRQSIIELKDEIDSGKDFVIIARKPCAEMTYEELKKSLIHVFKRSGMKRIKK</sequence>
<organism>
    <name type="scientific">Bacillus mycoides (strain KBAB4)</name>
    <name type="common">Bacillus weihenstephanensis</name>
    <dbReference type="NCBI Taxonomy" id="315730"/>
    <lineage>
        <taxon>Bacteria</taxon>
        <taxon>Bacillati</taxon>
        <taxon>Bacillota</taxon>
        <taxon>Bacilli</taxon>
        <taxon>Bacillales</taxon>
        <taxon>Bacillaceae</taxon>
        <taxon>Bacillus</taxon>
        <taxon>Bacillus cereus group</taxon>
    </lineage>
</organism>
<feature type="chain" id="PRO_1000100347" description="Ribonuclease P protein component">
    <location>
        <begin position="1"/>
        <end position="115"/>
    </location>
</feature>
<keyword id="KW-0255">Endonuclease</keyword>
<keyword id="KW-0378">Hydrolase</keyword>
<keyword id="KW-0540">Nuclease</keyword>
<keyword id="KW-0694">RNA-binding</keyword>
<keyword id="KW-0819">tRNA processing</keyword>
<dbReference type="EC" id="3.1.26.5" evidence="1"/>
<dbReference type="EMBL" id="CP000903">
    <property type="protein sequence ID" value="ABY46423.1"/>
    <property type="molecule type" value="Genomic_DNA"/>
</dbReference>
<dbReference type="RefSeq" id="WP_002089963.1">
    <property type="nucleotide sequence ID" value="NZ_CAKMRX030000123.1"/>
</dbReference>
<dbReference type="SMR" id="A9VTM3"/>
<dbReference type="KEGG" id="bwe:BcerKBAB4_5280"/>
<dbReference type="eggNOG" id="COG0594">
    <property type="taxonomic scope" value="Bacteria"/>
</dbReference>
<dbReference type="HOGENOM" id="CLU_117179_9_1_9"/>
<dbReference type="Proteomes" id="UP000002154">
    <property type="component" value="Chromosome"/>
</dbReference>
<dbReference type="GO" id="GO:0030677">
    <property type="term" value="C:ribonuclease P complex"/>
    <property type="evidence" value="ECO:0007669"/>
    <property type="project" value="TreeGrafter"/>
</dbReference>
<dbReference type="GO" id="GO:0042781">
    <property type="term" value="F:3'-tRNA processing endoribonuclease activity"/>
    <property type="evidence" value="ECO:0007669"/>
    <property type="project" value="TreeGrafter"/>
</dbReference>
<dbReference type="GO" id="GO:0004526">
    <property type="term" value="F:ribonuclease P activity"/>
    <property type="evidence" value="ECO:0007669"/>
    <property type="project" value="UniProtKB-UniRule"/>
</dbReference>
<dbReference type="GO" id="GO:0000049">
    <property type="term" value="F:tRNA binding"/>
    <property type="evidence" value="ECO:0007669"/>
    <property type="project" value="UniProtKB-UniRule"/>
</dbReference>
<dbReference type="GO" id="GO:0001682">
    <property type="term" value="P:tRNA 5'-leader removal"/>
    <property type="evidence" value="ECO:0007669"/>
    <property type="project" value="UniProtKB-UniRule"/>
</dbReference>
<dbReference type="FunFam" id="3.30.230.10:FF:000021">
    <property type="entry name" value="Ribonuclease P protein component"/>
    <property type="match status" value="1"/>
</dbReference>
<dbReference type="Gene3D" id="3.30.230.10">
    <property type="match status" value="1"/>
</dbReference>
<dbReference type="HAMAP" id="MF_00227">
    <property type="entry name" value="RNase_P"/>
    <property type="match status" value="1"/>
</dbReference>
<dbReference type="InterPro" id="IPR020568">
    <property type="entry name" value="Ribosomal_Su5_D2-typ_SF"/>
</dbReference>
<dbReference type="InterPro" id="IPR014721">
    <property type="entry name" value="Ribsml_uS5_D2-typ_fold_subgr"/>
</dbReference>
<dbReference type="InterPro" id="IPR000100">
    <property type="entry name" value="RNase_P"/>
</dbReference>
<dbReference type="InterPro" id="IPR020539">
    <property type="entry name" value="RNase_P_CS"/>
</dbReference>
<dbReference type="NCBIfam" id="TIGR00188">
    <property type="entry name" value="rnpA"/>
    <property type="match status" value="1"/>
</dbReference>
<dbReference type="PANTHER" id="PTHR33992">
    <property type="entry name" value="RIBONUCLEASE P PROTEIN COMPONENT"/>
    <property type="match status" value="1"/>
</dbReference>
<dbReference type="PANTHER" id="PTHR33992:SF1">
    <property type="entry name" value="RIBONUCLEASE P PROTEIN COMPONENT"/>
    <property type="match status" value="1"/>
</dbReference>
<dbReference type="Pfam" id="PF00825">
    <property type="entry name" value="Ribonuclease_P"/>
    <property type="match status" value="1"/>
</dbReference>
<dbReference type="SUPFAM" id="SSF54211">
    <property type="entry name" value="Ribosomal protein S5 domain 2-like"/>
    <property type="match status" value="1"/>
</dbReference>
<dbReference type="PROSITE" id="PS00648">
    <property type="entry name" value="RIBONUCLEASE_P"/>
    <property type="match status" value="1"/>
</dbReference>